<dbReference type="EC" id="4.2.1.33" evidence="1"/>
<dbReference type="EMBL" id="BX572593">
    <property type="protein sequence ID" value="CAE25684.1"/>
    <property type="molecule type" value="Genomic_DNA"/>
</dbReference>
<dbReference type="RefSeq" id="WP_011155808.1">
    <property type="nucleotide sequence ID" value="NZ_CP116810.1"/>
</dbReference>
<dbReference type="SMR" id="Q6ND69"/>
<dbReference type="STRING" id="258594.RPA0240"/>
<dbReference type="GeneID" id="66891247"/>
<dbReference type="eggNOG" id="COG0065">
    <property type="taxonomic scope" value="Bacteria"/>
</dbReference>
<dbReference type="HOGENOM" id="CLU_006714_3_4_5"/>
<dbReference type="PhylomeDB" id="Q6ND69"/>
<dbReference type="UniPathway" id="UPA00048">
    <property type="reaction ID" value="UER00071"/>
</dbReference>
<dbReference type="GO" id="GO:0003861">
    <property type="term" value="F:3-isopropylmalate dehydratase activity"/>
    <property type="evidence" value="ECO:0007669"/>
    <property type="project" value="UniProtKB-UniRule"/>
</dbReference>
<dbReference type="GO" id="GO:0051539">
    <property type="term" value="F:4 iron, 4 sulfur cluster binding"/>
    <property type="evidence" value="ECO:0007669"/>
    <property type="project" value="UniProtKB-KW"/>
</dbReference>
<dbReference type="GO" id="GO:0046872">
    <property type="term" value="F:metal ion binding"/>
    <property type="evidence" value="ECO:0007669"/>
    <property type="project" value="UniProtKB-KW"/>
</dbReference>
<dbReference type="GO" id="GO:0009098">
    <property type="term" value="P:L-leucine biosynthetic process"/>
    <property type="evidence" value="ECO:0007669"/>
    <property type="project" value="UniProtKB-UniRule"/>
</dbReference>
<dbReference type="CDD" id="cd01583">
    <property type="entry name" value="IPMI"/>
    <property type="match status" value="1"/>
</dbReference>
<dbReference type="FunFam" id="3.30.499.10:FF:000007">
    <property type="entry name" value="3-isopropylmalate dehydratase large subunit"/>
    <property type="match status" value="1"/>
</dbReference>
<dbReference type="Gene3D" id="3.30.499.10">
    <property type="entry name" value="Aconitase, domain 3"/>
    <property type="match status" value="2"/>
</dbReference>
<dbReference type="HAMAP" id="MF_01026">
    <property type="entry name" value="LeuC_type1"/>
    <property type="match status" value="1"/>
</dbReference>
<dbReference type="InterPro" id="IPR004430">
    <property type="entry name" value="3-IsopropMal_deHydase_lsu"/>
</dbReference>
<dbReference type="InterPro" id="IPR015931">
    <property type="entry name" value="Acnase/IPM_dHydase_lsu_aba_1/3"/>
</dbReference>
<dbReference type="InterPro" id="IPR001030">
    <property type="entry name" value="Acoase/IPM_deHydtase_lsu_aba"/>
</dbReference>
<dbReference type="InterPro" id="IPR018136">
    <property type="entry name" value="Aconitase_4Fe-4S_BS"/>
</dbReference>
<dbReference type="InterPro" id="IPR036008">
    <property type="entry name" value="Aconitase_4Fe-4S_dom"/>
</dbReference>
<dbReference type="InterPro" id="IPR050067">
    <property type="entry name" value="IPM_dehydratase_rel_enz"/>
</dbReference>
<dbReference type="InterPro" id="IPR033941">
    <property type="entry name" value="IPMI_cat"/>
</dbReference>
<dbReference type="NCBIfam" id="TIGR00170">
    <property type="entry name" value="leuC"/>
    <property type="match status" value="1"/>
</dbReference>
<dbReference type="NCBIfam" id="NF004016">
    <property type="entry name" value="PRK05478.1"/>
    <property type="match status" value="1"/>
</dbReference>
<dbReference type="NCBIfam" id="NF009116">
    <property type="entry name" value="PRK12466.1"/>
    <property type="match status" value="1"/>
</dbReference>
<dbReference type="PANTHER" id="PTHR43822:SF9">
    <property type="entry name" value="3-ISOPROPYLMALATE DEHYDRATASE"/>
    <property type="match status" value="1"/>
</dbReference>
<dbReference type="PANTHER" id="PTHR43822">
    <property type="entry name" value="HOMOACONITASE, MITOCHONDRIAL-RELATED"/>
    <property type="match status" value="1"/>
</dbReference>
<dbReference type="Pfam" id="PF00330">
    <property type="entry name" value="Aconitase"/>
    <property type="match status" value="1"/>
</dbReference>
<dbReference type="PRINTS" id="PR00415">
    <property type="entry name" value="ACONITASE"/>
</dbReference>
<dbReference type="SUPFAM" id="SSF53732">
    <property type="entry name" value="Aconitase iron-sulfur domain"/>
    <property type="match status" value="1"/>
</dbReference>
<dbReference type="PROSITE" id="PS00450">
    <property type="entry name" value="ACONITASE_1"/>
    <property type="match status" value="1"/>
</dbReference>
<dbReference type="PROSITE" id="PS01244">
    <property type="entry name" value="ACONITASE_2"/>
    <property type="match status" value="1"/>
</dbReference>
<keyword id="KW-0004">4Fe-4S</keyword>
<keyword id="KW-0028">Amino-acid biosynthesis</keyword>
<keyword id="KW-0100">Branched-chain amino acid biosynthesis</keyword>
<keyword id="KW-0408">Iron</keyword>
<keyword id="KW-0411">Iron-sulfur</keyword>
<keyword id="KW-0432">Leucine biosynthesis</keyword>
<keyword id="KW-0456">Lyase</keyword>
<keyword id="KW-0479">Metal-binding</keyword>
<protein>
    <recommendedName>
        <fullName evidence="1">3-isopropylmalate dehydratase large subunit</fullName>
        <ecNumber evidence="1">4.2.1.33</ecNumber>
    </recommendedName>
    <alternativeName>
        <fullName evidence="1">Alpha-IPM isomerase</fullName>
        <shortName evidence="1">IPMI</shortName>
    </alternativeName>
    <alternativeName>
        <fullName evidence="1">Isopropylmalate isomerase</fullName>
    </alternativeName>
</protein>
<sequence length="469" mass="50478">MSAKPTTLYDKIWNDHLVHEAEDGTCLLYIDRHLVHEVTSPQAFEGLRTAGRKVHAPEKTLAVVDHNVPTTDRSKPNPDPESAEQIAALAENARDFGITYYNEFDKRQGVVHVIGPEQGFTLPGTTIVCGDSHTSTHGAFGALAHGIGTSEVEHVLATQTLIQKKAKNMRVTVDGQLPDGVTAKDVILAIIGEIGTAGGTGYVLEYAGDAIRSLSMEGRMTVCNMSIEGGARAGLIAPDERAYEFLKGRPLAPKGAAWDAALRYWDTLRSDDGAHFDHELKLDAAALPPIVTWGTSPEDVISVTGRVPNPADIADEAKRLSKERALAYMGLTPGTKITDIKIDRMFIGSCTNGRIEDLRAAAKVAEGKTVNANVNAIIVPGSGLVKEQAEAEGLDKIFIKAGFEWREPGCSMCLAMNPDKLAPEERCASTSNRNFEGRQGFKGRTHLVSPAMAAAAAIAGHFVDIRDWH</sequence>
<organism>
    <name type="scientific">Rhodopseudomonas palustris (strain ATCC BAA-98 / CGA009)</name>
    <dbReference type="NCBI Taxonomy" id="258594"/>
    <lineage>
        <taxon>Bacteria</taxon>
        <taxon>Pseudomonadati</taxon>
        <taxon>Pseudomonadota</taxon>
        <taxon>Alphaproteobacteria</taxon>
        <taxon>Hyphomicrobiales</taxon>
        <taxon>Nitrobacteraceae</taxon>
        <taxon>Rhodopseudomonas</taxon>
    </lineage>
</organism>
<name>LEUC_RHOPA</name>
<evidence type="ECO:0000255" key="1">
    <source>
        <dbReference type="HAMAP-Rule" id="MF_01026"/>
    </source>
</evidence>
<gene>
    <name evidence="1" type="primary">leuC</name>
    <name type="ordered locus">RPA0240</name>
</gene>
<comment type="function">
    <text evidence="1">Catalyzes the isomerization between 2-isopropylmalate and 3-isopropylmalate, via the formation of 2-isopropylmaleate.</text>
</comment>
<comment type="catalytic activity">
    <reaction evidence="1">
        <text>(2R,3S)-3-isopropylmalate = (2S)-2-isopropylmalate</text>
        <dbReference type="Rhea" id="RHEA:32287"/>
        <dbReference type="ChEBI" id="CHEBI:1178"/>
        <dbReference type="ChEBI" id="CHEBI:35121"/>
        <dbReference type="EC" id="4.2.1.33"/>
    </reaction>
</comment>
<comment type="cofactor">
    <cofactor evidence="1">
        <name>[4Fe-4S] cluster</name>
        <dbReference type="ChEBI" id="CHEBI:49883"/>
    </cofactor>
    <text evidence="1">Binds 1 [4Fe-4S] cluster per subunit.</text>
</comment>
<comment type="pathway">
    <text evidence="1">Amino-acid biosynthesis; L-leucine biosynthesis; L-leucine from 3-methyl-2-oxobutanoate: step 2/4.</text>
</comment>
<comment type="subunit">
    <text evidence="1">Heterodimer of LeuC and LeuD.</text>
</comment>
<comment type="similarity">
    <text evidence="1">Belongs to the aconitase/IPM isomerase family. LeuC type 1 subfamily.</text>
</comment>
<accession>Q6ND69</accession>
<proteinExistence type="inferred from homology"/>
<feature type="chain" id="PRO_0000076798" description="3-isopropylmalate dehydratase large subunit">
    <location>
        <begin position="1"/>
        <end position="469"/>
    </location>
</feature>
<feature type="binding site" evidence="1">
    <location>
        <position position="350"/>
    </location>
    <ligand>
        <name>[4Fe-4S] cluster</name>
        <dbReference type="ChEBI" id="CHEBI:49883"/>
    </ligand>
</feature>
<feature type="binding site" evidence="1">
    <location>
        <position position="410"/>
    </location>
    <ligand>
        <name>[4Fe-4S] cluster</name>
        <dbReference type="ChEBI" id="CHEBI:49883"/>
    </ligand>
</feature>
<feature type="binding site" evidence="1">
    <location>
        <position position="413"/>
    </location>
    <ligand>
        <name>[4Fe-4S] cluster</name>
        <dbReference type="ChEBI" id="CHEBI:49883"/>
    </ligand>
</feature>
<reference key="1">
    <citation type="journal article" date="2004" name="Nat. Biotechnol.">
        <title>Complete genome sequence of the metabolically versatile photosynthetic bacterium Rhodopseudomonas palustris.</title>
        <authorList>
            <person name="Larimer F.W."/>
            <person name="Chain P."/>
            <person name="Hauser L."/>
            <person name="Lamerdin J.E."/>
            <person name="Malfatti S."/>
            <person name="Do L."/>
            <person name="Land M.L."/>
            <person name="Pelletier D.A."/>
            <person name="Beatty J.T."/>
            <person name="Lang A.S."/>
            <person name="Tabita F.R."/>
            <person name="Gibson J.L."/>
            <person name="Hanson T.E."/>
            <person name="Bobst C."/>
            <person name="Torres y Torres J.L."/>
            <person name="Peres C."/>
            <person name="Harrison F.H."/>
            <person name="Gibson J."/>
            <person name="Harwood C.S."/>
        </authorList>
    </citation>
    <scope>NUCLEOTIDE SEQUENCE [LARGE SCALE GENOMIC DNA]</scope>
    <source>
        <strain>ATCC BAA-98 / CGA009</strain>
    </source>
</reference>